<organism>
    <name type="scientific">Agrobacterium fabrum (strain C58 / ATCC 33970)</name>
    <name type="common">Agrobacterium tumefaciens (strain C58)</name>
    <dbReference type="NCBI Taxonomy" id="176299"/>
    <lineage>
        <taxon>Bacteria</taxon>
        <taxon>Pseudomonadati</taxon>
        <taxon>Pseudomonadota</taxon>
        <taxon>Alphaproteobacteria</taxon>
        <taxon>Hyphomicrobiales</taxon>
        <taxon>Rhizobiaceae</taxon>
        <taxon>Rhizobium/Agrobacterium group</taxon>
        <taxon>Agrobacterium</taxon>
        <taxon>Agrobacterium tumefaciens complex</taxon>
    </lineage>
</organism>
<protein>
    <recommendedName>
        <fullName evidence="1">Trans-aconitate 2-methyltransferase</fullName>
        <ecNumber evidence="1">2.1.1.144</ecNumber>
    </recommendedName>
</protein>
<gene>
    <name evidence="1" type="primary">tam</name>
    <name type="ordered locus">Atu0870</name>
    <name type="ORF">AGR_C_1589</name>
</gene>
<feature type="chain" id="PRO_0000218076" description="Trans-aconitate 2-methyltransferase">
    <location>
        <begin position="1"/>
        <end position="256"/>
    </location>
</feature>
<feature type="helix" evidence="2">
    <location>
        <begin position="6"/>
        <end position="8"/>
    </location>
</feature>
<feature type="helix" evidence="2">
    <location>
        <begin position="14"/>
        <end position="16"/>
    </location>
</feature>
<feature type="helix" evidence="2">
    <location>
        <begin position="17"/>
        <end position="23"/>
    </location>
</feature>
<feature type="strand" evidence="2">
    <location>
        <begin position="32"/>
        <end position="37"/>
    </location>
</feature>
<feature type="turn" evidence="2">
    <location>
        <begin position="40"/>
        <end position="42"/>
    </location>
</feature>
<feature type="helix" evidence="2">
    <location>
        <begin position="43"/>
        <end position="52"/>
    </location>
</feature>
<feature type="strand" evidence="2">
    <location>
        <begin position="56"/>
        <end position="62"/>
    </location>
</feature>
<feature type="helix" evidence="2">
    <location>
        <begin position="64"/>
        <end position="73"/>
    </location>
</feature>
<feature type="strand" evidence="2">
    <location>
        <begin position="77"/>
        <end position="81"/>
    </location>
</feature>
<feature type="turn" evidence="2">
    <location>
        <begin position="84"/>
        <end position="86"/>
    </location>
</feature>
<feature type="strand" evidence="2">
    <location>
        <begin position="93"/>
        <end position="100"/>
    </location>
</feature>
<feature type="helix" evidence="2">
    <location>
        <begin position="102"/>
        <end position="104"/>
    </location>
</feature>
<feature type="helix" evidence="2">
    <location>
        <begin position="108"/>
        <end position="115"/>
    </location>
</feature>
<feature type="helix" evidence="2">
    <location>
        <begin position="116"/>
        <end position="118"/>
    </location>
</feature>
<feature type="strand" evidence="2">
    <location>
        <begin position="119"/>
        <end position="130"/>
    </location>
</feature>
<feature type="helix" evidence="2">
    <location>
        <begin position="136"/>
        <end position="147"/>
    </location>
</feature>
<feature type="helix" evidence="2">
    <location>
        <begin position="151"/>
        <end position="153"/>
    </location>
</feature>
<feature type="helix" evidence="2">
    <location>
        <begin position="167"/>
        <end position="174"/>
    </location>
</feature>
<feature type="helix" evidence="2">
    <location>
        <begin position="175"/>
        <end position="177"/>
    </location>
</feature>
<feature type="strand" evidence="2">
    <location>
        <begin position="178"/>
        <end position="193"/>
    </location>
</feature>
<feature type="helix" evidence="2">
    <location>
        <begin position="195"/>
        <end position="202"/>
    </location>
</feature>
<feature type="turn" evidence="2">
    <location>
        <begin position="203"/>
        <end position="208"/>
    </location>
</feature>
<feature type="helix" evidence="2">
    <location>
        <begin position="209"/>
        <end position="212"/>
    </location>
</feature>
<feature type="helix" evidence="2">
    <location>
        <begin position="216"/>
        <end position="218"/>
    </location>
</feature>
<feature type="helix" evidence="2">
    <location>
        <begin position="219"/>
        <end position="233"/>
    </location>
</feature>
<feature type="strand" evidence="2">
    <location>
        <begin position="242"/>
        <end position="255"/>
    </location>
</feature>
<dbReference type="EC" id="2.1.1.144" evidence="1"/>
<dbReference type="EMBL" id="AE007869">
    <property type="protein sequence ID" value="AAK86677.1"/>
    <property type="molecule type" value="Genomic_DNA"/>
</dbReference>
<dbReference type="PIR" id="AF2683">
    <property type="entry name" value="AF2683"/>
</dbReference>
<dbReference type="PIR" id="D97465">
    <property type="entry name" value="D97465"/>
</dbReference>
<dbReference type="RefSeq" id="NP_353892.1">
    <property type="nucleotide sequence ID" value="NC_003062.2"/>
</dbReference>
<dbReference type="RefSeq" id="WP_006312207.1">
    <property type="nucleotide sequence ID" value="NC_003062.2"/>
</dbReference>
<dbReference type="PDB" id="2P35">
    <property type="method" value="X-ray"/>
    <property type="resolution" value="1.95 A"/>
    <property type="chains" value="A/B=1-256"/>
</dbReference>
<dbReference type="PDBsum" id="2P35"/>
<dbReference type="SMR" id="Q8UH15"/>
<dbReference type="STRING" id="176299.Atu0870"/>
<dbReference type="EnsemblBacteria" id="AAK86677">
    <property type="protein sequence ID" value="AAK86677"/>
    <property type="gene ID" value="Atu0870"/>
</dbReference>
<dbReference type="GeneID" id="1132908"/>
<dbReference type="KEGG" id="atu:Atu0870"/>
<dbReference type="PATRIC" id="fig|176299.10.peg.868"/>
<dbReference type="eggNOG" id="COG4106">
    <property type="taxonomic scope" value="Bacteria"/>
</dbReference>
<dbReference type="HOGENOM" id="CLU_037990_5_2_5"/>
<dbReference type="OrthoDB" id="9795085at2"/>
<dbReference type="PhylomeDB" id="Q8UH15"/>
<dbReference type="BioCyc" id="AGRO:ATU0870-MONOMER"/>
<dbReference type="EvolutionaryTrace" id="Q8UH15"/>
<dbReference type="Proteomes" id="UP000000813">
    <property type="component" value="Chromosome circular"/>
</dbReference>
<dbReference type="GO" id="GO:0005737">
    <property type="term" value="C:cytoplasm"/>
    <property type="evidence" value="ECO:0007669"/>
    <property type="project" value="UniProtKB-SubCell"/>
</dbReference>
<dbReference type="GO" id="GO:0030798">
    <property type="term" value="F:trans-aconitate 2-methyltransferase activity"/>
    <property type="evidence" value="ECO:0007669"/>
    <property type="project" value="UniProtKB-UniRule"/>
</dbReference>
<dbReference type="GO" id="GO:0032259">
    <property type="term" value="P:methylation"/>
    <property type="evidence" value="ECO:0007669"/>
    <property type="project" value="UniProtKB-KW"/>
</dbReference>
<dbReference type="CDD" id="cd02440">
    <property type="entry name" value="AdoMet_MTases"/>
    <property type="match status" value="1"/>
</dbReference>
<dbReference type="Gene3D" id="1.10.150.290">
    <property type="entry name" value="S-adenosyl-L-methionine-dependent methyltransferases"/>
    <property type="match status" value="1"/>
</dbReference>
<dbReference type="Gene3D" id="3.40.50.150">
    <property type="entry name" value="Vaccinia Virus protein VP39"/>
    <property type="match status" value="1"/>
</dbReference>
<dbReference type="HAMAP" id="MF_00560">
    <property type="entry name" value="Tran_acon_Me_trans"/>
    <property type="match status" value="1"/>
</dbReference>
<dbReference type="InterPro" id="IPR029063">
    <property type="entry name" value="SAM-dependent_MTases_sf"/>
</dbReference>
<dbReference type="InterPro" id="IPR023506">
    <property type="entry name" value="Trans-aconitate_MeTrfase"/>
</dbReference>
<dbReference type="InterPro" id="IPR023149">
    <property type="entry name" value="Trans_acon_MeTrfase_C"/>
</dbReference>
<dbReference type="NCBIfam" id="NF002463">
    <property type="entry name" value="PRK01683.1"/>
    <property type="match status" value="1"/>
</dbReference>
<dbReference type="PANTHER" id="PTHR43861:SF1">
    <property type="entry name" value="TRANS-ACONITATE 2-METHYLTRANSFERASE"/>
    <property type="match status" value="1"/>
</dbReference>
<dbReference type="PANTHER" id="PTHR43861">
    <property type="entry name" value="TRANS-ACONITATE 2-METHYLTRANSFERASE-RELATED"/>
    <property type="match status" value="1"/>
</dbReference>
<dbReference type="Pfam" id="PF13489">
    <property type="entry name" value="Methyltransf_23"/>
    <property type="match status" value="1"/>
</dbReference>
<dbReference type="SUPFAM" id="SSF53335">
    <property type="entry name" value="S-adenosyl-L-methionine-dependent methyltransferases"/>
    <property type="match status" value="1"/>
</dbReference>
<reference key="1">
    <citation type="journal article" date="2001" name="Science">
        <title>The genome of the natural genetic engineer Agrobacterium tumefaciens C58.</title>
        <authorList>
            <person name="Wood D.W."/>
            <person name="Setubal J.C."/>
            <person name="Kaul R."/>
            <person name="Monks D.E."/>
            <person name="Kitajima J.P."/>
            <person name="Okura V.K."/>
            <person name="Zhou Y."/>
            <person name="Chen L."/>
            <person name="Wood G.E."/>
            <person name="Almeida N.F. Jr."/>
            <person name="Woo L."/>
            <person name="Chen Y."/>
            <person name="Paulsen I.T."/>
            <person name="Eisen J.A."/>
            <person name="Karp P.D."/>
            <person name="Bovee D. Sr."/>
            <person name="Chapman P."/>
            <person name="Clendenning J."/>
            <person name="Deatherage G."/>
            <person name="Gillet W."/>
            <person name="Grant C."/>
            <person name="Kutyavin T."/>
            <person name="Levy R."/>
            <person name="Li M.-J."/>
            <person name="McClelland E."/>
            <person name="Palmieri A."/>
            <person name="Raymond C."/>
            <person name="Rouse G."/>
            <person name="Saenphimmachak C."/>
            <person name="Wu Z."/>
            <person name="Romero P."/>
            <person name="Gordon D."/>
            <person name="Zhang S."/>
            <person name="Yoo H."/>
            <person name="Tao Y."/>
            <person name="Biddle P."/>
            <person name="Jung M."/>
            <person name="Krespan W."/>
            <person name="Perry M."/>
            <person name="Gordon-Kamm B."/>
            <person name="Liao L."/>
            <person name="Kim S."/>
            <person name="Hendrick C."/>
            <person name="Zhao Z.-Y."/>
            <person name="Dolan M."/>
            <person name="Chumley F."/>
            <person name="Tingey S.V."/>
            <person name="Tomb J.-F."/>
            <person name="Gordon M.P."/>
            <person name="Olson M.V."/>
            <person name="Nester E.W."/>
        </authorList>
    </citation>
    <scope>NUCLEOTIDE SEQUENCE [LARGE SCALE GENOMIC DNA]</scope>
    <source>
        <strain>C58 / ATCC 33970</strain>
    </source>
</reference>
<reference key="2">
    <citation type="journal article" date="2001" name="Science">
        <title>Genome sequence of the plant pathogen and biotechnology agent Agrobacterium tumefaciens C58.</title>
        <authorList>
            <person name="Goodner B."/>
            <person name="Hinkle G."/>
            <person name="Gattung S."/>
            <person name="Miller N."/>
            <person name="Blanchard M."/>
            <person name="Qurollo B."/>
            <person name="Goldman B.S."/>
            <person name="Cao Y."/>
            <person name="Askenazi M."/>
            <person name="Halling C."/>
            <person name="Mullin L."/>
            <person name="Houmiel K."/>
            <person name="Gordon J."/>
            <person name="Vaudin M."/>
            <person name="Iartchouk O."/>
            <person name="Epp A."/>
            <person name="Liu F."/>
            <person name="Wollam C."/>
            <person name="Allinger M."/>
            <person name="Doughty D."/>
            <person name="Scott C."/>
            <person name="Lappas C."/>
            <person name="Markelz B."/>
            <person name="Flanagan C."/>
            <person name="Crowell C."/>
            <person name="Gurson J."/>
            <person name="Lomo C."/>
            <person name="Sear C."/>
            <person name="Strub G."/>
            <person name="Cielo C."/>
            <person name="Slater S."/>
        </authorList>
    </citation>
    <scope>NUCLEOTIDE SEQUENCE [LARGE SCALE GENOMIC DNA]</scope>
    <source>
        <strain>C58 / ATCC 33970</strain>
    </source>
</reference>
<sequence length="256" mass="28437">MAWSAQQYLKFEDERTRPARDLLAQVPLERVLNGYDLGCGPGNSTELLTDRYGVNVITGIDSDDDMLEKAADRLPNTNFGKADLATWKPAQKADLLYANAVFQWVPDHLAVLSQLMDQLESGGVLAVQMPDNLQEPTHIAMHETADGGPWKDAFSGGGLRRKPLPPPSDYFNALSPKSSRVDVWHTVYNHPMKDADSIVEWVKGTGLRPYLAAAGEENREAFLADYTRRIAAAYPPMADGRLLLRFPRLFVVAVKK</sequence>
<evidence type="ECO:0000255" key="1">
    <source>
        <dbReference type="HAMAP-Rule" id="MF_00560"/>
    </source>
</evidence>
<evidence type="ECO:0007829" key="2">
    <source>
        <dbReference type="PDB" id="2P35"/>
    </source>
</evidence>
<keyword id="KW-0002">3D-structure</keyword>
<keyword id="KW-0963">Cytoplasm</keyword>
<keyword id="KW-0489">Methyltransferase</keyword>
<keyword id="KW-1185">Reference proteome</keyword>
<keyword id="KW-0949">S-adenosyl-L-methionine</keyword>
<keyword id="KW-0808">Transferase</keyword>
<proteinExistence type="evidence at protein level"/>
<accession>Q8UH15</accession>
<comment type="function">
    <text evidence="1">Catalyzes the S-adenosylmethionine monomethyl esterification of trans-aconitate.</text>
</comment>
<comment type="catalytic activity">
    <reaction evidence="1">
        <text>trans-aconitate + S-adenosyl-L-methionine = (E)-3-(methoxycarbonyl)pent-2-enedioate + S-adenosyl-L-homocysteine</text>
        <dbReference type="Rhea" id="RHEA:14969"/>
        <dbReference type="ChEBI" id="CHEBI:15708"/>
        <dbReference type="ChEBI" id="CHEBI:57470"/>
        <dbReference type="ChEBI" id="CHEBI:57856"/>
        <dbReference type="ChEBI" id="CHEBI:59789"/>
        <dbReference type="EC" id="2.1.1.144"/>
    </reaction>
</comment>
<comment type="subcellular location">
    <subcellularLocation>
        <location evidence="1">Cytoplasm</location>
    </subcellularLocation>
</comment>
<comment type="similarity">
    <text evidence="1">Belongs to the methyltransferase superfamily. Tam family.</text>
</comment>
<name>TAM_AGRFC</name>